<protein>
    <recommendedName>
        <fullName evidence="1">Nucleoid-associated protein PC1_1077</fullName>
    </recommendedName>
</protein>
<proteinExistence type="inferred from homology"/>
<gene>
    <name type="ordered locus">PC1_1077</name>
</gene>
<accession>C6DB84</accession>
<dbReference type="EMBL" id="CP001657">
    <property type="protein sequence ID" value="ACT12126.1"/>
    <property type="molecule type" value="Genomic_DNA"/>
</dbReference>
<dbReference type="RefSeq" id="WP_010286242.1">
    <property type="nucleotide sequence ID" value="NC_012917.1"/>
</dbReference>
<dbReference type="SMR" id="C6DB84"/>
<dbReference type="STRING" id="561230.PC1_1077"/>
<dbReference type="KEGG" id="pct:PC1_1077"/>
<dbReference type="eggNOG" id="COG0718">
    <property type="taxonomic scope" value="Bacteria"/>
</dbReference>
<dbReference type="HOGENOM" id="CLU_140930_0_0_6"/>
<dbReference type="OrthoDB" id="9808738at2"/>
<dbReference type="Proteomes" id="UP000002736">
    <property type="component" value="Chromosome"/>
</dbReference>
<dbReference type="GO" id="GO:0043590">
    <property type="term" value="C:bacterial nucleoid"/>
    <property type="evidence" value="ECO:0007669"/>
    <property type="project" value="UniProtKB-UniRule"/>
</dbReference>
<dbReference type="GO" id="GO:0005829">
    <property type="term" value="C:cytosol"/>
    <property type="evidence" value="ECO:0007669"/>
    <property type="project" value="TreeGrafter"/>
</dbReference>
<dbReference type="GO" id="GO:0003677">
    <property type="term" value="F:DNA binding"/>
    <property type="evidence" value="ECO:0007669"/>
    <property type="project" value="UniProtKB-UniRule"/>
</dbReference>
<dbReference type="FunFam" id="3.30.1310.10:FF:000001">
    <property type="entry name" value="Nucleoid-associated protein YbaB"/>
    <property type="match status" value="1"/>
</dbReference>
<dbReference type="Gene3D" id="3.30.1310.10">
    <property type="entry name" value="Nucleoid-associated protein YbaB-like domain"/>
    <property type="match status" value="1"/>
</dbReference>
<dbReference type="HAMAP" id="MF_00274">
    <property type="entry name" value="DNA_YbaB_EbfC"/>
    <property type="match status" value="1"/>
</dbReference>
<dbReference type="InterPro" id="IPR036894">
    <property type="entry name" value="YbaB-like_sf"/>
</dbReference>
<dbReference type="InterPro" id="IPR004401">
    <property type="entry name" value="YbaB/EbfC"/>
</dbReference>
<dbReference type="NCBIfam" id="TIGR00103">
    <property type="entry name" value="DNA_YbaB_EbfC"/>
    <property type="match status" value="1"/>
</dbReference>
<dbReference type="PANTHER" id="PTHR33449">
    <property type="entry name" value="NUCLEOID-ASSOCIATED PROTEIN YBAB"/>
    <property type="match status" value="1"/>
</dbReference>
<dbReference type="PANTHER" id="PTHR33449:SF1">
    <property type="entry name" value="NUCLEOID-ASSOCIATED PROTEIN YBAB"/>
    <property type="match status" value="1"/>
</dbReference>
<dbReference type="Pfam" id="PF02575">
    <property type="entry name" value="YbaB_DNA_bd"/>
    <property type="match status" value="1"/>
</dbReference>
<dbReference type="PIRSF" id="PIRSF004555">
    <property type="entry name" value="UCP004555"/>
    <property type="match status" value="1"/>
</dbReference>
<dbReference type="SUPFAM" id="SSF82607">
    <property type="entry name" value="YbaB-like"/>
    <property type="match status" value="1"/>
</dbReference>
<reference key="1">
    <citation type="submission" date="2009-07" db="EMBL/GenBank/DDBJ databases">
        <title>Complete sequence of Pectobacterium carotovorum subsp. carotovorum PC1.</title>
        <authorList>
            <consortium name="US DOE Joint Genome Institute"/>
            <person name="Lucas S."/>
            <person name="Copeland A."/>
            <person name="Lapidus A."/>
            <person name="Glavina del Rio T."/>
            <person name="Tice H."/>
            <person name="Bruce D."/>
            <person name="Goodwin L."/>
            <person name="Pitluck S."/>
            <person name="Munk A.C."/>
            <person name="Brettin T."/>
            <person name="Detter J.C."/>
            <person name="Han C."/>
            <person name="Tapia R."/>
            <person name="Larimer F."/>
            <person name="Land M."/>
            <person name="Hauser L."/>
            <person name="Kyrpides N."/>
            <person name="Mikhailova N."/>
            <person name="Balakrishnan V."/>
            <person name="Glasner J."/>
            <person name="Perna N.T."/>
        </authorList>
    </citation>
    <scope>NUCLEOTIDE SEQUENCE [LARGE SCALE GENOMIC DNA]</scope>
    <source>
        <strain>PC1</strain>
    </source>
</reference>
<comment type="function">
    <text evidence="1">Binds to DNA and alters its conformation. May be involved in regulation of gene expression, nucleoid organization and DNA protection.</text>
</comment>
<comment type="subunit">
    <text evidence="1">Homodimer.</text>
</comment>
<comment type="subcellular location">
    <subcellularLocation>
        <location evidence="1">Cytoplasm</location>
        <location evidence="1">Nucleoid</location>
    </subcellularLocation>
</comment>
<comment type="similarity">
    <text evidence="1">Belongs to the YbaB/EbfC family.</text>
</comment>
<evidence type="ECO:0000255" key="1">
    <source>
        <dbReference type="HAMAP-Rule" id="MF_00274"/>
    </source>
</evidence>
<keyword id="KW-0963">Cytoplasm</keyword>
<keyword id="KW-0238">DNA-binding</keyword>
<name>Y1077_PECCP</name>
<sequence length="109" mass="11959">MFGKGGIGNLMKQAQQMQEKMQQMQEEVANLEVTGESGAGLVKITINGAHNCRRVEIDPSLMEDDKEMLEDLIAAAFNDAARRIAETQKEKMAAVSSGMQLPPGFKMPF</sequence>
<organism>
    <name type="scientific">Pectobacterium carotovorum subsp. carotovorum (strain PC1)</name>
    <dbReference type="NCBI Taxonomy" id="561230"/>
    <lineage>
        <taxon>Bacteria</taxon>
        <taxon>Pseudomonadati</taxon>
        <taxon>Pseudomonadota</taxon>
        <taxon>Gammaproteobacteria</taxon>
        <taxon>Enterobacterales</taxon>
        <taxon>Pectobacteriaceae</taxon>
        <taxon>Pectobacterium</taxon>
    </lineage>
</organism>
<feature type="chain" id="PRO_1000204776" description="Nucleoid-associated protein PC1_1077">
    <location>
        <begin position="1"/>
        <end position="109"/>
    </location>
</feature>